<organism>
    <name type="scientific">Xylella fastidiosa (strain 9a5c)</name>
    <dbReference type="NCBI Taxonomy" id="160492"/>
    <lineage>
        <taxon>Bacteria</taxon>
        <taxon>Pseudomonadati</taxon>
        <taxon>Pseudomonadota</taxon>
        <taxon>Gammaproteobacteria</taxon>
        <taxon>Lysobacterales</taxon>
        <taxon>Lysobacteraceae</taxon>
        <taxon>Xylella</taxon>
    </lineage>
</organism>
<name>PSD_XYLFA</name>
<feature type="chain" id="PRO_0000029719" description="Phosphatidylserine decarboxylase beta chain" evidence="1">
    <location>
        <begin position="1"/>
        <end position="246"/>
    </location>
</feature>
<feature type="chain" id="PRO_0000029720" description="Phosphatidylserine decarboxylase alpha chain" evidence="1">
    <location>
        <begin position="247"/>
        <end position="293"/>
    </location>
</feature>
<feature type="active site" description="Charge relay system; for autoendoproteolytic cleavage activity" evidence="1">
    <location>
        <position position="88"/>
    </location>
</feature>
<feature type="active site" description="Charge relay system; for autoendoproteolytic cleavage activity" evidence="1">
    <location>
        <position position="144"/>
    </location>
</feature>
<feature type="active site" description="Charge relay system; for autoendoproteolytic cleavage activity" evidence="1">
    <location>
        <position position="247"/>
    </location>
</feature>
<feature type="active site" description="Schiff-base intermediate with substrate; via pyruvic acid; for decarboxylase activity" evidence="1">
    <location>
        <position position="247"/>
    </location>
</feature>
<feature type="site" description="Cleavage (non-hydrolytic); by autocatalysis" evidence="1">
    <location>
        <begin position="246"/>
        <end position="247"/>
    </location>
</feature>
<feature type="modified residue" description="Pyruvic acid (Ser); by autocatalysis" evidence="1">
    <location>
        <position position="247"/>
    </location>
</feature>
<comment type="function">
    <text evidence="1">Catalyzes the formation of phosphatidylethanolamine (PtdEtn) from phosphatidylserine (PtdSer).</text>
</comment>
<comment type="catalytic activity">
    <reaction evidence="1">
        <text>a 1,2-diacyl-sn-glycero-3-phospho-L-serine + H(+) = a 1,2-diacyl-sn-glycero-3-phosphoethanolamine + CO2</text>
        <dbReference type="Rhea" id="RHEA:20828"/>
        <dbReference type="ChEBI" id="CHEBI:15378"/>
        <dbReference type="ChEBI" id="CHEBI:16526"/>
        <dbReference type="ChEBI" id="CHEBI:57262"/>
        <dbReference type="ChEBI" id="CHEBI:64612"/>
        <dbReference type="EC" id="4.1.1.65"/>
    </reaction>
</comment>
<comment type="cofactor">
    <cofactor evidence="1">
        <name>pyruvate</name>
        <dbReference type="ChEBI" id="CHEBI:15361"/>
    </cofactor>
    <text evidence="1">Binds 1 pyruvoyl group covalently per subunit.</text>
</comment>
<comment type="pathway">
    <text evidence="1">Phospholipid metabolism; phosphatidylethanolamine biosynthesis; phosphatidylethanolamine from CDP-diacylglycerol: step 2/2.</text>
</comment>
<comment type="subunit">
    <text evidence="1">Heterodimer of a large membrane-associated beta subunit and a small pyruvoyl-containing alpha subunit.</text>
</comment>
<comment type="subcellular location">
    <subcellularLocation>
        <location evidence="1">Cell membrane</location>
        <topology evidence="1">Peripheral membrane protein</topology>
    </subcellularLocation>
</comment>
<comment type="PTM">
    <text evidence="1">Is synthesized initially as an inactive proenzyme. Formation of the active enzyme involves a self-maturation process in which the active site pyruvoyl group is generated from an internal serine residue via an autocatalytic post-translational modification. Two non-identical subunits are generated from the proenzyme in this reaction, and the pyruvate is formed at the N-terminus of the alpha chain, which is derived from the carboxyl end of the proenzyme. The autoendoproteolytic cleavage occurs by a canonical serine protease mechanism, in which the side chain hydroxyl group of the serine supplies its oxygen atom to form the C-terminus of the beta chain, while the remainder of the serine residue undergoes an oxidative deamination to produce ammonia and the pyruvoyl prosthetic group on the alpha chain. During this reaction, the Ser that is part of the protease active site of the proenzyme becomes the pyruvoyl prosthetic group, which constitutes an essential element of the active site of the mature decarboxylase.</text>
</comment>
<comment type="similarity">
    <text evidence="1">Belongs to the phosphatidylserine decarboxylase family. PSD-B subfamily. Prokaryotic type I sub-subfamily.</text>
</comment>
<gene>
    <name evidence="1" type="primary">psd</name>
    <name type="ordered locus">XF_1365</name>
</gene>
<evidence type="ECO:0000255" key="1">
    <source>
        <dbReference type="HAMAP-Rule" id="MF_00662"/>
    </source>
</evidence>
<protein>
    <recommendedName>
        <fullName evidence="1">Phosphatidylserine decarboxylase proenzyme</fullName>
        <ecNumber evidence="1">4.1.1.65</ecNumber>
    </recommendedName>
    <component>
        <recommendedName>
            <fullName evidence="1">Phosphatidylserine decarboxylase alpha chain</fullName>
        </recommendedName>
    </component>
    <component>
        <recommendedName>
            <fullName evidence="1">Phosphatidylserine decarboxylase beta chain</fullName>
        </recommendedName>
    </component>
</protein>
<proteinExistence type="inferred from homology"/>
<keyword id="KW-1003">Cell membrane</keyword>
<keyword id="KW-0210">Decarboxylase</keyword>
<keyword id="KW-0444">Lipid biosynthesis</keyword>
<keyword id="KW-0443">Lipid metabolism</keyword>
<keyword id="KW-0456">Lyase</keyword>
<keyword id="KW-0472">Membrane</keyword>
<keyword id="KW-0594">Phospholipid biosynthesis</keyword>
<keyword id="KW-1208">Phospholipid metabolism</keyword>
<keyword id="KW-0670">Pyruvate</keyword>
<keyword id="KW-0865">Zymogen</keyword>
<sequence>MNFVTTLTYLLPHRMLSSLARHVAYCQHPLIKQWLIDTVIAKFDVNLSEAAEPDAHAYPSFNAFFTRSLKTGIRLPDPNPDTLLMPADGRISQLGPIREGRIFQAKGQSFTATELLGDTAAAAAFTNGLFATVYLSPRDYHRVHMPCTGQLLKTVHVPGRLFSVGPDAVRQIPRLFARNERLACHFDTAFGPMVLVMVGALLVSGVETVWGGVEIPAYGDRITHKDYQGRNIAIERFAEMARFNYGSTVIVLLPPNVFTLAPHLTAESPVTLGQALAHRLSLNHSTQAPTQEK</sequence>
<reference key="1">
    <citation type="journal article" date="2000" name="Nature">
        <title>The genome sequence of the plant pathogen Xylella fastidiosa.</title>
        <authorList>
            <person name="Simpson A.J.G."/>
            <person name="Reinach F.C."/>
            <person name="Arruda P."/>
            <person name="Abreu F.A."/>
            <person name="Acencio M."/>
            <person name="Alvarenga R."/>
            <person name="Alves L.M.C."/>
            <person name="Araya J.E."/>
            <person name="Baia G.S."/>
            <person name="Baptista C.S."/>
            <person name="Barros M.H."/>
            <person name="Bonaccorsi E.D."/>
            <person name="Bordin S."/>
            <person name="Bove J.M."/>
            <person name="Briones M.R.S."/>
            <person name="Bueno M.R.P."/>
            <person name="Camargo A.A."/>
            <person name="Camargo L.E.A."/>
            <person name="Carraro D.M."/>
            <person name="Carrer H."/>
            <person name="Colauto N.B."/>
            <person name="Colombo C."/>
            <person name="Costa F.F."/>
            <person name="Costa M.C.R."/>
            <person name="Costa-Neto C.M."/>
            <person name="Coutinho L.L."/>
            <person name="Cristofani M."/>
            <person name="Dias-Neto E."/>
            <person name="Docena C."/>
            <person name="El-Dorry H."/>
            <person name="Facincani A.P."/>
            <person name="Ferreira A.J.S."/>
            <person name="Ferreira V.C.A."/>
            <person name="Ferro J.A."/>
            <person name="Fraga J.S."/>
            <person name="Franca S.C."/>
            <person name="Franco M.C."/>
            <person name="Frohme M."/>
            <person name="Furlan L.R."/>
            <person name="Garnier M."/>
            <person name="Goldman G.H."/>
            <person name="Goldman M.H.S."/>
            <person name="Gomes S.L."/>
            <person name="Gruber A."/>
            <person name="Ho P.L."/>
            <person name="Hoheisel J.D."/>
            <person name="Junqueira M.L."/>
            <person name="Kemper E.L."/>
            <person name="Kitajima J.P."/>
            <person name="Krieger J.E."/>
            <person name="Kuramae E.E."/>
            <person name="Laigret F."/>
            <person name="Lambais M.R."/>
            <person name="Leite L.C.C."/>
            <person name="Lemos E.G.M."/>
            <person name="Lemos M.V.F."/>
            <person name="Lopes S.A."/>
            <person name="Lopes C.R."/>
            <person name="Machado J.A."/>
            <person name="Machado M.A."/>
            <person name="Madeira A.M.B.N."/>
            <person name="Madeira H.M.F."/>
            <person name="Marino C.L."/>
            <person name="Marques M.V."/>
            <person name="Martins E.A.L."/>
            <person name="Martins E.M.F."/>
            <person name="Matsukuma A.Y."/>
            <person name="Menck C.F.M."/>
            <person name="Miracca E.C."/>
            <person name="Miyaki C.Y."/>
            <person name="Monteiro-Vitorello C.B."/>
            <person name="Moon D.H."/>
            <person name="Nagai M.A."/>
            <person name="Nascimento A.L.T.O."/>
            <person name="Netto L.E.S."/>
            <person name="Nhani A. Jr."/>
            <person name="Nobrega F.G."/>
            <person name="Nunes L.R."/>
            <person name="Oliveira M.A."/>
            <person name="de Oliveira M.C."/>
            <person name="de Oliveira R.C."/>
            <person name="Palmieri D.A."/>
            <person name="Paris A."/>
            <person name="Peixoto B.R."/>
            <person name="Pereira G.A.G."/>
            <person name="Pereira H.A. Jr."/>
            <person name="Pesquero J.B."/>
            <person name="Quaggio R.B."/>
            <person name="Roberto P.G."/>
            <person name="Rodrigues V."/>
            <person name="de Rosa A.J.M."/>
            <person name="de Rosa V.E. Jr."/>
            <person name="de Sa R.G."/>
            <person name="Santelli R.V."/>
            <person name="Sawasaki H.E."/>
            <person name="da Silva A.C.R."/>
            <person name="da Silva A.M."/>
            <person name="da Silva F.R."/>
            <person name="Silva W.A. Jr."/>
            <person name="da Silveira J.F."/>
            <person name="Silvestri M.L.Z."/>
            <person name="Siqueira W.J."/>
            <person name="de Souza A.A."/>
            <person name="de Souza A.P."/>
            <person name="Terenzi M.F."/>
            <person name="Truffi D."/>
            <person name="Tsai S.M."/>
            <person name="Tsuhako M.H."/>
            <person name="Vallada H."/>
            <person name="Van Sluys M.A."/>
            <person name="Verjovski-Almeida S."/>
            <person name="Vettore A.L."/>
            <person name="Zago M.A."/>
            <person name="Zatz M."/>
            <person name="Meidanis J."/>
            <person name="Setubal J.C."/>
        </authorList>
    </citation>
    <scope>NUCLEOTIDE SEQUENCE [LARGE SCALE GENOMIC DNA]</scope>
    <source>
        <strain>9a5c</strain>
    </source>
</reference>
<accession>Q9PDL4</accession>
<dbReference type="EC" id="4.1.1.65" evidence="1"/>
<dbReference type="EMBL" id="AE003849">
    <property type="protein sequence ID" value="AAF84174.1"/>
    <property type="molecule type" value="Genomic_DNA"/>
</dbReference>
<dbReference type="PIR" id="A82690">
    <property type="entry name" value="A82690"/>
</dbReference>
<dbReference type="SMR" id="Q9PDL4"/>
<dbReference type="STRING" id="160492.XF_1365"/>
<dbReference type="KEGG" id="xfa:XF_1365"/>
<dbReference type="eggNOG" id="COG0688">
    <property type="taxonomic scope" value="Bacteria"/>
</dbReference>
<dbReference type="HOGENOM" id="CLU_029061_4_1_6"/>
<dbReference type="UniPathway" id="UPA00558">
    <property type="reaction ID" value="UER00616"/>
</dbReference>
<dbReference type="Proteomes" id="UP000000812">
    <property type="component" value="Chromosome"/>
</dbReference>
<dbReference type="GO" id="GO:0005886">
    <property type="term" value="C:plasma membrane"/>
    <property type="evidence" value="ECO:0007669"/>
    <property type="project" value="UniProtKB-SubCell"/>
</dbReference>
<dbReference type="GO" id="GO:0004609">
    <property type="term" value="F:phosphatidylserine decarboxylase activity"/>
    <property type="evidence" value="ECO:0007669"/>
    <property type="project" value="UniProtKB-UniRule"/>
</dbReference>
<dbReference type="GO" id="GO:0006646">
    <property type="term" value="P:phosphatidylethanolamine biosynthetic process"/>
    <property type="evidence" value="ECO:0007669"/>
    <property type="project" value="UniProtKB-UniRule"/>
</dbReference>
<dbReference type="HAMAP" id="MF_00662">
    <property type="entry name" value="PS_decarb_PSD_B_type1"/>
    <property type="match status" value="1"/>
</dbReference>
<dbReference type="InterPro" id="IPR003817">
    <property type="entry name" value="PS_Dcarbxylase"/>
</dbReference>
<dbReference type="InterPro" id="IPR033177">
    <property type="entry name" value="PSD-B"/>
</dbReference>
<dbReference type="InterPro" id="IPR033178">
    <property type="entry name" value="PSD_type1_pro"/>
</dbReference>
<dbReference type="NCBIfam" id="TIGR00163">
    <property type="entry name" value="PS_decarb"/>
    <property type="match status" value="1"/>
</dbReference>
<dbReference type="PANTHER" id="PTHR10067">
    <property type="entry name" value="PHOSPHATIDYLSERINE DECARBOXYLASE"/>
    <property type="match status" value="1"/>
</dbReference>
<dbReference type="PANTHER" id="PTHR10067:SF6">
    <property type="entry name" value="PHOSPHATIDYLSERINE DECARBOXYLASE PROENZYME, MITOCHONDRIAL"/>
    <property type="match status" value="1"/>
</dbReference>
<dbReference type="Pfam" id="PF02666">
    <property type="entry name" value="PS_Dcarbxylase"/>
    <property type="match status" value="1"/>
</dbReference>